<organism>
    <name type="scientific">Staphylococcus aureus (strain bovine RF122 / ET3-1)</name>
    <dbReference type="NCBI Taxonomy" id="273036"/>
    <lineage>
        <taxon>Bacteria</taxon>
        <taxon>Bacillati</taxon>
        <taxon>Bacillota</taxon>
        <taxon>Bacilli</taxon>
        <taxon>Bacillales</taxon>
        <taxon>Staphylococcaceae</taxon>
        <taxon>Staphylococcus</taxon>
    </lineage>
</organism>
<dbReference type="EMBL" id="AJ938182">
    <property type="status" value="NOT_ANNOTATED_CDS"/>
    <property type="molecule type" value="Genomic_DNA"/>
</dbReference>
<dbReference type="GO" id="GO:0031640">
    <property type="term" value="P:killing of cells of another organism"/>
    <property type="evidence" value="ECO:0007669"/>
    <property type="project" value="UniProtKB-KW"/>
</dbReference>
<dbReference type="InterPro" id="IPR031429">
    <property type="entry name" value="PSM_alpha"/>
</dbReference>
<dbReference type="NCBIfam" id="NF033425">
    <property type="entry name" value="PSM_alpha_1_2"/>
    <property type="match status" value="1"/>
</dbReference>
<dbReference type="Pfam" id="PF17063">
    <property type="entry name" value="PSMalpha"/>
    <property type="match status" value="1"/>
</dbReference>
<feature type="peptide" id="PRO_0000345048" description="Phenol-soluble modulin alpha 2 peptide">
    <location>
        <begin position="1"/>
        <end position="21"/>
    </location>
</feature>
<protein>
    <recommendedName>
        <fullName>Phenol-soluble modulin alpha 2 peptide</fullName>
    </recommendedName>
</protein>
<accession>P0C7Z5</accession>
<keyword id="KW-0204">Cytolysis</keyword>
<keyword id="KW-0843">Virulence</keyword>
<comment type="function">
    <text evidence="1">Peptide which can recruit, activate and subsequently lyse neutrophils, thus eliminating the main cellular defense against infection.</text>
</comment>
<comment type="similarity">
    <text evidence="2">Belongs to the phenol-soluble modulin alpha peptides family.</text>
</comment>
<evidence type="ECO:0000250" key="1">
    <source>
        <dbReference type="UniProtKB" id="A9JX06"/>
    </source>
</evidence>
<evidence type="ECO:0000305" key="2"/>
<reference key="1">
    <citation type="journal article" date="2007" name="PLoS ONE">
        <title>Molecular correlates of host specialization in Staphylococcus aureus.</title>
        <authorList>
            <person name="Herron-Olson L."/>
            <person name="Fitzgerald J.R."/>
            <person name="Musser J.M."/>
            <person name="Kapur V."/>
        </authorList>
    </citation>
    <scope>NUCLEOTIDE SEQUENCE [LARGE SCALE GENOMIC DNA]</scope>
    <source>
        <strain>bovine RF122 / ET3-1</strain>
    </source>
</reference>
<proteinExistence type="inferred from homology"/>
<gene>
    <name type="primary">psmA2</name>
    <name type="ordered locus">SAB0401.3</name>
</gene>
<name>PSMA2_STAAB</name>
<sequence>MGIIAGIIKFIKGLIEKFTGK</sequence>